<proteinExistence type="evidence at transcript level"/>
<dbReference type="EMBL" id="X90841">
    <property type="protein sequence ID" value="CAA62347.1"/>
    <property type="molecule type" value="Genomic_DNA"/>
</dbReference>
<dbReference type="EMBL" id="X90842">
    <property type="protein sequence ID" value="CAA62347.1"/>
    <property type="status" value="JOINED"/>
    <property type="molecule type" value="Genomic_DNA"/>
</dbReference>
<dbReference type="EMBL" id="X90819">
    <property type="protein sequence ID" value="CAA62333.1"/>
    <property type="molecule type" value="mRNA"/>
</dbReference>
<dbReference type="EMBL" id="U40773">
    <property type="protein sequence ID" value="AAC52723.1"/>
    <property type="molecule type" value="Genomic_DNA"/>
</dbReference>
<dbReference type="EMBL" id="U40772">
    <property type="protein sequence ID" value="AAC52723.1"/>
    <property type="status" value="JOINED"/>
    <property type="molecule type" value="Genomic_DNA"/>
</dbReference>
<dbReference type="EMBL" id="U95962">
    <property type="protein sequence ID" value="AAC53164.1"/>
    <property type="molecule type" value="mRNA"/>
</dbReference>
<dbReference type="EMBL" id="BC026140">
    <property type="protein sequence ID" value="AAH26140.1"/>
    <property type="molecule type" value="mRNA"/>
</dbReference>
<dbReference type="CCDS" id="CCDS24240.1"/>
<dbReference type="PIR" id="JC5366">
    <property type="entry name" value="JC5366"/>
</dbReference>
<dbReference type="PIR" id="S70580">
    <property type="entry name" value="S70580"/>
</dbReference>
<dbReference type="RefSeq" id="NP_034695.1">
    <property type="nucleotide sequence ID" value="NM_010565.4"/>
</dbReference>
<dbReference type="SMR" id="P55104"/>
<dbReference type="FunCoup" id="P55104">
    <property type="interactions" value="546"/>
</dbReference>
<dbReference type="STRING" id="10090.ENSMUSP00000026472"/>
<dbReference type="GlyCosmos" id="P55104">
    <property type="glycosylation" value="4 sites, No reported glycans"/>
</dbReference>
<dbReference type="GlyGen" id="P55104">
    <property type="glycosylation" value="4 sites"/>
</dbReference>
<dbReference type="iPTMnet" id="P55104"/>
<dbReference type="PhosphoSitePlus" id="P55104"/>
<dbReference type="PaxDb" id="10090-ENSMUSP00000026472"/>
<dbReference type="PeptideAtlas" id="P55104"/>
<dbReference type="ProteomicsDB" id="269485"/>
<dbReference type="Antibodypedia" id="28599">
    <property type="antibodies" value="319 antibodies from 29 providers"/>
</dbReference>
<dbReference type="DNASU" id="16325"/>
<dbReference type="Ensembl" id="ENSMUST00000026472.10">
    <property type="protein sequence ID" value="ENSMUSP00000026472.9"/>
    <property type="gene ID" value="ENSMUSG00000025405.10"/>
</dbReference>
<dbReference type="GeneID" id="16325"/>
<dbReference type="KEGG" id="mmu:16325"/>
<dbReference type="UCSC" id="uc007hjj.2">
    <property type="organism name" value="mouse"/>
</dbReference>
<dbReference type="AGR" id="MGI:105932"/>
<dbReference type="CTD" id="3626"/>
<dbReference type="MGI" id="MGI:105932">
    <property type="gene designation" value="Inhbc"/>
</dbReference>
<dbReference type="VEuPathDB" id="HostDB:ENSMUSG00000025405"/>
<dbReference type="eggNOG" id="KOG3900">
    <property type="taxonomic scope" value="Eukaryota"/>
</dbReference>
<dbReference type="GeneTree" id="ENSGT00940000160065"/>
<dbReference type="HOGENOM" id="CLU_020515_5_1_1"/>
<dbReference type="InParanoid" id="P55104"/>
<dbReference type="OMA" id="GIDCQGG"/>
<dbReference type="OrthoDB" id="6516235at2759"/>
<dbReference type="PhylomeDB" id="P55104"/>
<dbReference type="TreeFam" id="TF351791"/>
<dbReference type="Reactome" id="R-MMU-209822">
    <property type="pathway name" value="Glycoprotein hormones"/>
</dbReference>
<dbReference type="BioGRID-ORCS" id="16325">
    <property type="hits" value="2 hits in 78 CRISPR screens"/>
</dbReference>
<dbReference type="PRO" id="PR:P55104"/>
<dbReference type="Proteomes" id="UP000000589">
    <property type="component" value="Chromosome 10"/>
</dbReference>
<dbReference type="RNAct" id="P55104">
    <property type="molecule type" value="protein"/>
</dbReference>
<dbReference type="Bgee" id="ENSMUSG00000025405">
    <property type="expression patterns" value="Expressed in liver and 5 other cell types or tissues"/>
</dbReference>
<dbReference type="GO" id="GO:0005576">
    <property type="term" value="C:extracellular region"/>
    <property type="evidence" value="ECO:0007669"/>
    <property type="project" value="UniProtKB-SubCell"/>
</dbReference>
<dbReference type="GO" id="GO:0008083">
    <property type="term" value="F:growth factor activity"/>
    <property type="evidence" value="ECO:0007669"/>
    <property type="project" value="UniProtKB-KW"/>
</dbReference>
<dbReference type="GO" id="GO:0005179">
    <property type="term" value="F:hormone activity"/>
    <property type="evidence" value="ECO:0007669"/>
    <property type="project" value="UniProtKB-KW"/>
</dbReference>
<dbReference type="CDD" id="cd19406">
    <property type="entry name" value="TGF_beta_INHBC_E"/>
    <property type="match status" value="1"/>
</dbReference>
<dbReference type="FunFam" id="2.10.90.10:FF:000005">
    <property type="entry name" value="Inhibin beta A chain"/>
    <property type="match status" value="1"/>
</dbReference>
<dbReference type="Gene3D" id="2.60.120.970">
    <property type="match status" value="1"/>
</dbReference>
<dbReference type="Gene3D" id="2.10.90.10">
    <property type="entry name" value="Cystine-knot cytokines"/>
    <property type="match status" value="1"/>
</dbReference>
<dbReference type="InterPro" id="IPR029034">
    <property type="entry name" value="Cystine-knot_cytokine"/>
</dbReference>
<dbReference type="InterPro" id="IPR001318">
    <property type="entry name" value="Inhibin_betaC"/>
</dbReference>
<dbReference type="InterPro" id="IPR001839">
    <property type="entry name" value="TGF-b_C"/>
</dbReference>
<dbReference type="InterPro" id="IPR015615">
    <property type="entry name" value="TGF-beta-rel"/>
</dbReference>
<dbReference type="InterPro" id="IPR017948">
    <property type="entry name" value="TGFb_CS"/>
</dbReference>
<dbReference type="PANTHER" id="PTHR11848:SF130">
    <property type="entry name" value="INHIBIN BETA C CHAIN"/>
    <property type="match status" value="1"/>
</dbReference>
<dbReference type="PANTHER" id="PTHR11848">
    <property type="entry name" value="TGF-BETA FAMILY"/>
    <property type="match status" value="1"/>
</dbReference>
<dbReference type="Pfam" id="PF00019">
    <property type="entry name" value="TGF_beta"/>
    <property type="match status" value="1"/>
</dbReference>
<dbReference type="PRINTS" id="PR00672">
    <property type="entry name" value="INHIBINBC"/>
</dbReference>
<dbReference type="SMART" id="SM00204">
    <property type="entry name" value="TGFB"/>
    <property type="match status" value="1"/>
</dbReference>
<dbReference type="SUPFAM" id="SSF57501">
    <property type="entry name" value="Cystine-knot cytokines"/>
    <property type="match status" value="1"/>
</dbReference>
<dbReference type="PROSITE" id="PS00250">
    <property type="entry name" value="TGF_BETA_1"/>
    <property type="match status" value="1"/>
</dbReference>
<dbReference type="PROSITE" id="PS51362">
    <property type="entry name" value="TGF_BETA_2"/>
    <property type="match status" value="1"/>
</dbReference>
<accession>P55104</accession>
<accession>Q61452</accession>
<protein>
    <recommendedName>
        <fullName>Inhibin beta C chain</fullName>
    </recommendedName>
    <alternativeName>
        <fullName>Activin beta-C chain</fullName>
    </alternativeName>
</protein>
<evidence type="ECO:0000250" key="1"/>
<evidence type="ECO:0000255" key="2"/>
<evidence type="ECO:0000305" key="3"/>
<reference key="1">
    <citation type="journal article" date="1996" name="Genomics">
        <title>Structure, chromosomal localization, and expression analysis of the mouse inhibin/activin beta C (Inhbc) gene.</title>
        <authorList>
            <person name="Schmitt J."/>
            <person name="Hoetten G."/>
            <person name="Jenkins N.A."/>
            <person name="Gilbert D.J."/>
            <person name="Copeland N.G."/>
            <person name="Pohl J."/>
            <person name="Schrewe H."/>
        </authorList>
    </citation>
    <scope>NUCLEOTIDE SEQUENCE [GENOMIC DNA / MRNA]</scope>
    <source>
        <strain>129</strain>
        <tissue>Liver</tissue>
    </source>
</reference>
<reference key="2">
    <citation type="journal article" date="1996" name="Biochim. Biophys. Acta">
        <title>Structural analysis of the mouse activin beta C gene.</title>
        <authorList>
            <person name="Lau A.L."/>
            <person name="Nishimori K."/>
            <person name="Matzuk M.M."/>
        </authorList>
    </citation>
    <scope>NUCLEOTIDE SEQUENCE [GENOMIC DNA]</scope>
</reference>
<reference key="3">
    <citation type="journal article" date="1997" name="Biochem. Biophys. Res. Commun.">
        <title>Genes coding for mouse activin beta C and beta E are closely linked and exhibit a liver-specific expression pattern in adult tissues.</title>
        <authorList>
            <person name="Fang J."/>
            <person name="Wang S.Q."/>
            <person name="Smiley E."/>
            <person name="Bonadio J."/>
        </authorList>
    </citation>
    <scope>NUCLEOTIDE SEQUENCE [MRNA]</scope>
</reference>
<reference key="4">
    <citation type="journal article" date="2004" name="Genome Res.">
        <title>The status, quality, and expansion of the NIH full-length cDNA project: the Mammalian Gene Collection (MGC).</title>
        <authorList>
            <consortium name="The MGC Project Team"/>
        </authorList>
    </citation>
    <scope>NUCLEOTIDE SEQUENCE [LARGE SCALE MRNA]</scope>
    <source>
        <strain>FVB/N</strain>
        <tissue>Liver</tissue>
    </source>
</reference>
<comment type="function">
    <text>Inhibins and activins inhibit and activate, respectively, the secretion of follitropin by the pituitary gland. Inhibins/activins are involved in regulating a number of diverse functions such as hypothalamic and pituitary hormone secretion, gonadal hormone secretion, germ cell development and maturation, erythroid differentiation, insulin secretion, nerve cell survival, embryonic axial development or bone growth, depending on their subunit composition. Inhibins appear to oppose the functions of activins.</text>
</comment>
<comment type="subunit">
    <text evidence="1">Homodimeric or heterodimeric through association with alpha and beta subunits, linked by one or more disulfide bonds. Inhibins are heterodimers of one alpha and one beta subunit. Activins are homo- or heterodimers of beta subunits only (By similarity).</text>
</comment>
<comment type="subcellular location">
    <subcellularLocation>
        <location evidence="1">Secreted</location>
    </subcellularLocation>
</comment>
<comment type="tissue specificity">
    <text>Mainly expressed in the adult liver.</text>
</comment>
<comment type="similarity">
    <text evidence="3">Belongs to the TGF-beta family.</text>
</comment>
<name>INHBC_MOUSE</name>
<keyword id="KW-0165">Cleavage on pair of basic residues</keyword>
<keyword id="KW-1015">Disulfide bond</keyword>
<keyword id="KW-0325">Glycoprotein</keyword>
<keyword id="KW-0339">Growth factor</keyword>
<keyword id="KW-0372">Hormone</keyword>
<keyword id="KW-1185">Reference proteome</keyword>
<keyword id="KW-0964">Secreted</keyword>
<keyword id="KW-0732">Signal</keyword>
<organism>
    <name type="scientific">Mus musculus</name>
    <name type="common">Mouse</name>
    <dbReference type="NCBI Taxonomy" id="10090"/>
    <lineage>
        <taxon>Eukaryota</taxon>
        <taxon>Metazoa</taxon>
        <taxon>Chordata</taxon>
        <taxon>Craniata</taxon>
        <taxon>Vertebrata</taxon>
        <taxon>Euteleostomi</taxon>
        <taxon>Mammalia</taxon>
        <taxon>Eutheria</taxon>
        <taxon>Euarchontoglires</taxon>
        <taxon>Glires</taxon>
        <taxon>Rodentia</taxon>
        <taxon>Myomorpha</taxon>
        <taxon>Muroidea</taxon>
        <taxon>Muridae</taxon>
        <taxon>Murinae</taxon>
        <taxon>Mus</taxon>
        <taxon>Mus</taxon>
    </lineage>
</organism>
<sequence length="352" mass="39401">MASSLLLALLFLTPTTVVNPKTEGPCPACWGAIFDLESQRELLLDLAKKSILDKLHLSQRPILSRPVSRGALKTALQRLRGPRRETLLEHDQRQEEYEIISFADTDLSSINQTRLEFHFSGRMASGMEVRQTRFMFFVQFPHNATQTMNIRVLVLRPYDTNLTLTSQYVVQVNASGWYQLLLGPEAQAACSQGHLTLELVPESQVAHSSLILGWFSHRPFVAAQVRVEGKHRVRRRGIDCQGASRMCCRQEFFVDFREIGWNDWIIQPEGYAMNFCTGQCPLHVAGMPGISASFHTAVLNLLKANAAAGTTGRGSCCVPTSRRPLSLLYYDRDSNIVKTDIPDMVVEACGCS</sequence>
<gene>
    <name type="primary">Inhbc</name>
</gene>
<feature type="signal peptide" evidence="2">
    <location>
        <begin position="1"/>
        <end position="18"/>
    </location>
</feature>
<feature type="propeptide" id="PRO_0000033732" evidence="2">
    <location>
        <begin position="19"/>
        <end position="236"/>
    </location>
</feature>
<feature type="chain" id="PRO_0000033733" description="Inhibin beta C chain">
    <location>
        <begin position="237"/>
        <end position="352"/>
    </location>
</feature>
<feature type="glycosylation site" description="N-linked (GlcNAc...) asparagine" evidence="2">
    <location>
        <position position="111"/>
    </location>
</feature>
<feature type="glycosylation site" description="N-linked (GlcNAc...) asparagine" evidence="2">
    <location>
        <position position="143"/>
    </location>
</feature>
<feature type="glycosylation site" description="N-linked (GlcNAc...) asparagine" evidence="2">
    <location>
        <position position="161"/>
    </location>
</feature>
<feature type="glycosylation site" description="N-linked (GlcNAc...) asparagine" evidence="2">
    <location>
        <position position="173"/>
    </location>
</feature>
<feature type="disulfide bond" evidence="1">
    <location>
        <begin position="240"/>
        <end position="248"/>
    </location>
</feature>
<feature type="disulfide bond" evidence="1">
    <location>
        <begin position="247"/>
        <end position="317"/>
    </location>
</feature>
<feature type="disulfide bond" evidence="1">
    <location>
        <begin position="276"/>
        <end position="349"/>
    </location>
</feature>
<feature type="disulfide bond" evidence="1">
    <location>
        <begin position="280"/>
        <end position="351"/>
    </location>
</feature>
<feature type="disulfide bond" description="Interchain" evidence="1">
    <location>
        <position position="316"/>
    </location>
</feature>
<feature type="sequence conflict" description="In Ref. 1; CAA62347/CAA62333." evidence="3" ref="1">
    <original>A</original>
    <variation>G</variation>
    <location>
        <position position="243"/>
    </location>
</feature>